<protein>
    <recommendedName>
        <fullName>DNA polymerase</fullName>
        <ecNumber evidence="29">2.7.7.7</ecNumber>
        <ecNumber evidence="28">3.1.11.-</ecNumber>
    </recommendedName>
    <alternativeName>
        <fullName evidence="46">Gene product 2</fullName>
        <shortName evidence="46">gp2</shortName>
    </alternativeName>
    <alternativeName>
        <fullName evidence="46">Protein p2</fullName>
    </alternativeName>
</protein>
<name>DPOL_BPPH2</name>
<comment type="function">
    <text evidence="2 15 19 24 27 28 29 34 39">Polymerase responsible for protein-primed viral DNA replication by strand displacement with high processivity and fidelity (PubMed:2498321, PubMed:3863101). To start replication, the DNA polymerase forms a heterodimer with a free primer terminal protein (TP), recognizes the replication origins at both 5' ends of the linear chromosome, and initiates replication using as primer the OH-group of Ser-232 of the TP (PubMed:22210885). This polymerase possesses three enzymatic activities: DNA synthesis (polymerase), primer terminal protein (TP) deoxynucleotidylation, which is the formation of a covalent linkage (phosphoester) between the hydroxyl group of a specific serine residue in TP and 5'-dAMP, a reaction directed by the second T at the 3' end, and 3' to 5' exonuclease activity (PubMed:2790959). Exonuclease activity has a proofreading purpose (PubMed:2790959). DNA polymerase edits the polymerization errors using an intramolecular pathway as the primer terminus travels from one active site to the other without dissociation from the DNA (PubMed:10493855). DNA polymerization catalyzed by the DNA polymerase is a highly accurate process, but the protein-primed initiation is a quite inaccurate reaction (PubMed:8428945). Since the polymerase initiates the replication on the second thymine, the TP-dAMP initiation product translocates backwards to recover the template information of the first nucleotide (sliding back-mechanism) (PubMed:19011105).</text>
</comment>
<comment type="catalytic activity">
    <reaction evidence="29">
        <text>DNA(n) + a 2'-deoxyribonucleoside 5'-triphosphate = DNA(n+1) + diphosphate</text>
        <dbReference type="Rhea" id="RHEA:22508"/>
        <dbReference type="Rhea" id="RHEA-COMP:17339"/>
        <dbReference type="Rhea" id="RHEA-COMP:17340"/>
        <dbReference type="ChEBI" id="CHEBI:33019"/>
        <dbReference type="ChEBI" id="CHEBI:61560"/>
        <dbReference type="ChEBI" id="CHEBI:173112"/>
        <dbReference type="EC" id="2.7.7.7"/>
    </reaction>
</comment>
<comment type="cofactor">
    <cofactor evidence="8 11 16 43">
        <name>Mg(2+)</name>
        <dbReference type="ChEBI" id="CHEBI:18420"/>
    </cofactor>
</comment>
<comment type="subunit">
    <text evidence="3 24 45">Interacts with the primer terminal protein; this interaction allows the initiation of TP-primed DNA replication at both viral DNA ends. Interacts with DNA.</text>
</comment>
<comment type="domain">
    <text evidence="13 18 20 37 42 45">The N-terminus contains the 3'-5' exonuclease activity and strand displacement ability (PubMed:8621470). The conserved motif YxGG/A located between the 3'-5' exonuclease and polymerization domains is important for DNA-binding, coordination between DNA synthesis and degradation and for the formation of a stable complex between TP and the DNA polymerase (PubMed:15777661, PubMed:8670845, PubMed:9931249). The C-terminus is involved in the protein-primed initiation, DNA polymerization and pyrophosphorolytic activities (PubMed:1850426, PubMed:8621470). The YCDTD motif is essential for the pyrophosphorolytic activity (PubMed:1850426). The TPR2 region is necessary for the strand displacement coupled to DNA synthesis and probably also for allowing the TP priming domain to move out from the polymerase during transition from initiation to elongation (PubMed:15845765, PubMed:19033368).</text>
</comment>
<comment type="miscellaneous">
    <text evidence="14">This DNA polymerase requires a protein as a primer.</text>
</comment>
<comment type="similarity">
    <text evidence="46">Belongs to the DNA polymerase type-B family.</text>
</comment>
<comment type="sequence caution">
    <conflict type="erroneous initiation">
        <sequence resource="EMBL-CDS" id="ACE96023"/>
    </conflict>
    <text>Truncated N-terminus.</text>
</comment>
<proteinExistence type="evidence at protein level"/>
<reference key="1">
    <citation type="journal article" date="1982" name="Gene">
        <title>Nucleotide sequence of the major early region of bacteriophage phi 29.</title>
        <authorList>
            <person name="Yoshikawa H."/>
            <person name="Ito J."/>
        </authorList>
    </citation>
    <scope>NUCLEOTIDE SEQUENCE [GENOMIC DNA]</scope>
</reference>
<reference key="2">
    <citation type="submission" date="2008-05" db="EMBL/GenBank/DDBJ databases">
        <authorList>
            <person name="Villegas A.P."/>
            <person name="Lingohr E.J."/>
            <person name="Ceyssens P.-J."/>
            <person name="Kropinski A.M."/>
        </authorList>
    </citation>
    <scope>NUCLEOTIDE SEQUENCE [GENOMIC DNA]</scope>
</reference>
<reference key="3">
    <citation type="journal article" date="1982" name="Nucleic Acids Res.">
        <title>Nucleotide sequence of the early genes 3 and 4 of bacteriophage phi 29.</title>
        <authorList>
            <person name="Escarmis C."/>
            <person name="Salas M."/>
        </authorList>
    </citation>
    <scope>NUCLEOTIDE SEQUENCE [GENOMIC DNA] OF 1-85</scope>
</reference>
<reference key="4">
    <citation type="journal article" date="1990" name="Nucleic Acids Res.">
        <title>Structural and functional analysis of temperature-sensitive mutants of the phage phi 29 DNA polymerase.</title>
        <authorList>
            <person name="Blasco M.A."/>
            <person name="Blanco L."/>
            <person name="Pares E."/>
            <person name="Salas M."/>
            <person name="Bernad A."/>
        </authorList>
    </citation>
    <scope>NUCLEOTIDE SEQUENCE [GENOMIC DNA]</scope>
    <scope>MUTANT TEMPERATURE-SENSITIVE TS2(24)</scope>
</reference>
<reference key="5">
    <citation type="journal article" date="1985" name="Proc. Natl. Acad. Sci. U.S.A.">
        <title>Replication of phage phi 29 DNA with purified terminal protein and DNA polymerase: synthesis of full-length phi 29 DNA.</title>
        <authorList>
            <person name="Blanco L."/>
            <person name="Salas M."/>
        </authorList>
    </citation>
    <scope>FUNCTION</scope>
    <scope>CATALYTIC ACTIVITY</scope>
</reference>
<reference key="6">
    <citation type="journal article" date="1989" name="J. Biol. Chem.">
        <title>Highly efficient DNA synthesis by the phage phi 29 DNA polymerase. Symmetrical mode of DNA replication.</title>
        <authorList>
            <person name="Blanco L."/>
            <person name="Bernad A."/>
            <person name="Lazaro J.M."/>
            <person name="Martin G."/>
            <person name="Garmendia C."/>
            <person name="Salas M."/>
        </authorList>
    </citation>
    <scope>FUNCTION</scope>
</reference>
<reference key="7">
    <citation type="journal article" date="1989" name="Cell">
        <title>A conserved 3'-&gt;5' exonuclease active site in prokaryotic and eukaryotic DNA polymerases.</title>
        <authorList>
            <person name="Bernad A."/>
            <person name="Blanco L."/>
            <person name="Lazaro J.M."/>
            <person name="Martin G."/>
            <person name="Salas M."/>
        </authorList>
    </citation>
    <scope>FUNCTION</scope>
    <scope>MUTAGENESIS OF ASP-12; GLU-14 AND ASP-66</scope>
</reference>
<reference key="8">
    <citation type="journal article" date="1990" name="Proc. Natl. Acad. Sci. U.S.A.">
        <title>The highly conserved amino acid sequence motif Tyr-Gly-Asp-Thr-Asp-Ser in alpha-like DNA polymerases is required by phage phi 29 DNA polymerase for protein-primed initiation and polymerization.</title>
        <authorList>
            <person name="Bernad A."/>
            <person name="Lazaro J.M."/>
            <person name="Salas M."/>
            <person name="Blanco L."/>
        </authorList>
    </citation>
    <scope>MUTAGENESIS OF TYR-454; CYS-455; ASP-456; THR-457 AND ASP-458</scope>
</reference>
<reference key="9">
    <citation type="journal article" date="1991" name="J. Biol. Chem.">
        <title>Characterization and mapping of the pyrophosphorolytic activity of the phage phi 29 DNA polymerase. Involvement of amino acid motifs highly conserved in alpha-like DNA polymerases.</title>
        <authorList>
            <person name="Blasco M.A."/>
            <person name="Bernad A."/>
            <person name="Blanco L."/>
            <person name="Salas M."/>
        </authorList>
    </citation>
    <scope>DOMAIN</scope>
</reference>
<reference key="10">
    <citation type="journal article" date="1992" name="J. Biol. Chem.">
        <title>DNA-independent deoxynucleotidylation of the phi 29 terminal protein by the phi 29 DNA polymerase.</title>
        <authorList>
            <person name="Blanco L."/>
            <person name="Bernad A."/>
            <person name="Esteban J.A."/>
            <person name="Salas M."/>
        </authorList>
    </citation>
    <scope>FUNCTION</scope>
</reference>
<reference key="11">
    <citation type="journal article" date="1992" name="Biochemistry">
        <title>Metal activation of synthetic and degradative activities of phi 29 DNA polymerase, a model enzyme for protein-primed DNA replication.</title>
        <authorList>
            <person name="Esteban J.A."/>
            <person name="Bernad A."/>
            <person name="Salas M."/>
            <person name="Blanco L."/>
        </authorList>
    </citation>
    <scope>MUTAGENESIS OF ASP-12; GLU-14; ASP-66 AND ASP-169</scope>
    <scope>COFACTOR</scope>
</reference>
<reference key="12">
    <citation type="journal article" date="1993" name="J. Biol. Chem.">
        <title>Fidelity of phi 29 DNA polymerase. Comparison between protein-primed initiation and DNA polymerization.</title>
        <authorList>
            <person name="Esteban J.A."/>
            <person name="Salas M."/>
            <person name="Blanco L."/>
        </authorList>
    </citation>
    <scope>FUNCTION</scope>
</reference>
<reference key="13">
    <citation type="journal article" date="1993" name="J. Biol. Chem.">
        <title>Phi 29 DNA polymerase active site. The conserved amino acid motif 'Kx3NSxYG' is involved in template-primer binding and dNTP selection.</title>
        <authorList>
            <person name="Blasco M.A."/>
            <person name="Lazaro J.M."/>
            <person name="Blanco L."/>
            <person name="Salas M."/>
        </authorList>
    </citation>
    <scope>MUTAGENESIS OF ASN-387; SER-388; GLY-391 AND PHE-393</scope>
</reference>
<reference key="14">
    <citation type="journal article" date="1993" name="J. Biol. Chem.">
        <title>Phi 29 DNA polymerase active site. Residue ASP249 of conserved amino acid motif 'Dx2SLYP' is critical for synthetic activities.</title>
        <authorList>
            <person name="Blasco M.A."/>
            <person name="Lazaro J.M."/>
            <person name="Blanco L."/>
            <person name="Salas M."/>
        </authorList>
    </citation>
    <scope>MUTAGENESIS OF ASP-249; SER-252; LEU-253 AND PRO-255</scope>
</reference>
<reference key="15">
    <citation type="journal article" date="1994" name="J. Biol. Chem.">
        <title>Primer-terminus stabilization at the phi 29 DNA polymerase active site. Mutational analysis of conserved motif TX2GR.</title>
        <authorList>
            <person name="Mendez J."/>
            <person name="Blanco L."/>
            <person name="Lazaro J.M."/>
            <person name="Salas M."/>
        </authorList>
    </citation>
    <scope>MUTAGENESIS OF THR-434; ALA-437 AND ARG-438</scope>
</reference>
<reference key="16">
    <citation type="journal article" date="1995" name="J. Biol. Chem.">
        <title>A novel kinetic analysis to calculate nucleotide affinity of proofreading DNA polymerases. Application to phi 29 DNA polymerase fidelity mutants.</title>
        <authorList>
            <person name="Saturno J."/>
            <person name="Blanco L."/>
            <person name="Salas M."/>
            <person name="Esteban J.A."/>
        </authorList>
    </citation>
    <scope>MUTAGENESIS OF TYR-254 AND TYR-390</scope>
</reference>
<reference key="17">
    <citation type="journal article" date="1995" name="J. Biol. Chem.">
        <title>Primer terminus stabilization at the phi 29 DNA polymerase active site. Mutational analysis of conserved motif KXY.</title>
        <authorList>
            <person name="Blasco M.A."/>
            <person name="Mendez J."/>
            <person name="Lazaro J.M."/>
            <person name="Blanco L."/>
            <person name="Salas M."/>
        </authorList>
    </citation>
    <scope>MUTAGENESIS OF LYS-498 AND TYR-500</scope>
</reference>
<reference key="18">
    <citation type="journal article" date="1996" name="J. Biol. Chem.">
        <title>Relating structure to function in phi29 DNA polymerase.</title>
        <authorList>
            <person name="Blanco L."/>
            <person name="Salas M."/>
        </authorList>
    </citation>
    <scope>DOMAIN</scope>
</reference>
<reference key="19">
    <citation type="journal article" date="1996" name="EMBO J.">
        <title>A DNA binding motif coordinating synthesis and degradation in proofreading DNA polymerases.</title>
        <authorList>
            <person name="Truniger V."/>
            <person name="Lazaro J.M."/>
            <person name="Salas M."/>
            <person name="Blanco L."/>
        </authorList>
    </citation>
    <scope>MUTAGENESIS OF ARG-223; TYR-226; TYR-226; ARG-227; ARG-227; GLY-228; GLY-228; GLY-229; GLY-229; PHE-230; PHE-230 AND PHE-230</scope>
    <scope>DOMAIN</scope>
</reference>
<reference key="20">
    <citation type="journal article" date="1996" name="EMBO J.">
        <title>Primer-terminus stabilization at the 3'-5' exonuclease active site of phi29 DNA polymerase. Involvement of two amino acid residues highly conserved in proofreading DNA polymerases.</title>
        <authorList>
            <person name="de Vega M."/>
            <person name="Lazaro J.M."/>
            <person name="Salas M."/>
            <person name="Blanco L."/>
        </authorList>
    </citation>
    <scope>MUTAGENESIS OF THR-15 AND ASN-62</scope>
</reference>
<reference key="21">
    <citation type="journal article" date="1997" name="EMBO J.">
        <title>Protein-primed DNA replication: a transition between two modes of priming by a unique DNA polymerase.</title>
        <authorList>
            <person name="Mendez J."/>
            <person name="Blanco L."/>
            <person name="Salas M."/>
        </authorList>
    </citation>
    <scope>FUNCTION</scope>
</reference>
<reference key="22">
    <citation type="journal article" date="1997" name="J. Mol. Biol.">
        <title>An invariant lysine residue is involved in catalysis at the 3'-5' exonuclease active site of eukaryotic-type DNA polymerases.</title>
        <authorList>
            <person name="de Vega M."/>
            <person name="Ilyina T."/>
            <person name="Lazaro J.M."/>
            <person name="Salas M."/>
            <person name="Blanco L."/>
        </authorList>
    </citation>
    <scope>MUTAGENESIS OF LYS-143</scope>
</reference>
<reference key="23">
    <citation type="journal article" date="1997" name="J. Mol. Biol.">
        <title>Phi29 DNA polymerase residue Lys383, invariant at motif B of DNA-dependent polymerases, is involved in dNTP binding.</title>
        <authorList>
            <person name="Saturno J."/>
            <person name="Lazaro J.M."/>
            <person name="Esteban F.J."/>
            <person name="Blanco L."/>
            <person name="Salas M."/>
        </authorList>
    </citation>
    <scope>MUTAGENESIS OF LYS-383</scope>
</reference>
<reference key="24">
    <citation type="journal article" date="1998" name="J. Mol. Biol.">
        <title>Mutational analysis of phi29 DNA polymerase residues acting as ssDNA ligands for 3'-5' exonucleolysis.</title>
        <authorList>
            <person name="de Vega M."/>
            <person name="Lazaro J.M."/>
            <person name="Salas M."/>
            <person name="Blanco L."/>
        </authorList>
    </citation>
    <scope>MUTAGENESIS OF PHE-65; SER-122 AND LEU-123</scope>
</reference>
<reference key="25">
    <citation type="journal article" date="1998" name="J. Biol. Chem.">
        <title>phi29 DNA polymerase residue Ser122, a single-stranded DNA ligand for 3'-5' exonucleolysis, is required to interact with the terminal protein.</title>
        <authorList>
            <person name="de Vega M."/>
            <person name="Blanco L."/>
            <person name="Salas M."/>
        </authorList>
    </citation>
    <scope>MUTAGENESIS OF PHE-65; SER-122 AND LEU-123</scope>
</reference>
<reference key="26">
    <citation type="journal article" date="1998" name="J. Mol. Biol.">
        <title>Role of the first aspartate residue of the 'YxDTDS' motif of phi29 DNA polymerase as a metal ligand during both TP-primed and DNA-primed DNA synthesis.</title>
        <authorList>
            <person name="Saturno J."/>
            <person name="Lazaro J.M."/>
            <person name="Blanco L."/>
            <person name="Salas M."/>
        </authorList>
    </citation>
    <scope>MUTAGENESIS OF ASP-456</scope>
    <scope>COFACTOR</scope>
</reference>
<reference key="27">
    <citation type="journal article" date="1998" name="J. Mol. Biol.">
        <title>Phi 29 DNA polymerase requires the N-terminal domain to bind terminal protein and DNA primer substrates.</title>
        <authorList>
            <person name="Truniger V."/>
            <person name="Lazaro J.M."/>
            <person name="Salas M."/>
            <person name="Blanco L."/>
        </authorList>
    </citation>
    <scope>DOMAIN</scope>
</reference>
<reference key="28">
    <citation type="journal article" date="1999" name="J. Mol. Biol.">
        <title>Role of the 'YxGG/A' motif of Phi29 DNA polymerase in protein-primed replication.</title>
        <authorList>
            <person name="Truniger V."/>
            <person name="Blanco L."/>
            <person name="Salas M."/>
        </authorList>
    </citation>
    <scope>MUTAGENESIS OF ARG-223; TYR-226; ARG-227; GLY-228; GLY-229; PHE-230 AND PHE-230</scope>
    <scope>DOMAIN</scope>
    <scope>INTERACTION WITH THE PRIMER TERMINAL PROTEIN</scope>
</reference>
<reference key="29">
    <citation type="journal article" date="1999" name="J. Mol. Biol.">
        <title>A single tyrosine prevents insertion of ribonucleotides in the eukaryotic-type phi29 DNA polymerase.</title>
        <authorList>
            <person name="Bonnin A."/>
            <person name="Lazaro J.M."/>
            <person name="Blanco L."/>
            <person name="Salas M."/>
        </authorList>
    </citation>
    <scope>MUTAGENESIS OF TYR-254</scope>
</reference>
<reference key="30">
    <citation type="journal article" date="1999" name="J. Mol. Biol.">
        <title>Processive proofreading and the spatial relationship between polymerase and exonuclease active sites of bacteriophage phi29 DNA polymerase.</title>
        <authorList>
            <person name="de Vega M."/>
            <person name="Blanco L."/>
            <person name="Salas M."/>
        </authorList>
    </citation>
    <scope>FUNCTION</scope>
</reference>
<reference key="31">
    <citation type="journal article" date="2002" name="J. Mol. Biol.">
        <title>A highly conserved lysine residue in phi29 DNA polymerase is important for correct binding of the templating nucleotide during initiation of phi29 DNA replication.</title>
        <authorList>
            <person name="Truniger V."/>
            <person name="Lazaro J.M."/>
            <person name="Blanco L."/>
            <person name="Salas M."/>
        </authorList>
    </citation>
    <scope>MUTAGENESIS OF LYS-392</scope>
</reference>
<reference key="32">
    <citation type="journal article" date="2002" name="Nucleic Acids Res.">
        <title>Phi29 DNA polymerase residues Tyr59, His61 and Phe69 of the highly conserved ExoII motif are essential for interaction with the terminal protein.</title>
        <authorList>
            <person name="Eisenbrandt R."/>
            <person name="Lazaro J.M."/>
            <person name="Salas M."/>
            <person name="de Vega M."/>
        </authorList>
    </citation>
    <scope>INTERACTION WITH THE PRIMER TERMINAL PROTEIN</scope>
    <scope>MUTAGENESIS OF TYR-59; HIS-61 AND PHE-69</scope>
</reference>
<reference key="33">
    <citation type="journal article" date="2002" name="Nucleic Acids Res.">
        <title>A positively charged residue of phi29 DNA polymerase, highly conserved in DNA polymerases from families A and B, is involved in binding the incoming nucleotide.</title>
        <authorList>
            <person name="Truniger V."/>
            <person name="Lazaro J.M."/>
            <person name="Esteban F.J."/>
            <person name="Blanco L."/>
            <person name="Salas M."/>
        </authorList>
    </citation>
    <scope>MUTAGENESIS OF ILE-364 AND LYS-371</scope>
</reference>
<reference key="34">
    <citation type="journal article" date="2003" name="J. Biol. Chem.">
        <title>phi 29 DNA polymerase residue Leu384, highly conserved in motif B of eukaryotic type DNA replicases, is involved in nucleotide insertion fidelity.</title>
        <authorList>
            <person name="Truniger V."/>
            <person name="Lazaro J.M."/>
            <person name="de Vega M."/>
            <person name="Blanco L."/>
            <person name="Salas M."/>
        </authorList>
    </citation>
    <scope>MUTAGENESIS OF LEU-384</scope>
</reference>
<reference key="35">
    <citation type="journal article" date="2003" name="J. Mol. Biol.">
        <title>phi29 DNA polymerase residue Phe128 of the highly conserved (S/T)Lx(2)h motif is required for a stable and functional interaction with the terminal protein.</title>
        <authorList>
            <person name="Rodriguez I."/>
            <person name="Lazaro J.M."/>
            <person name="Salas M."/>
            <person name="de Vega M."/>
        </authorList>
    </citation>
    <scope>MUTAGENESIS OF PHE-128</scope>
</reference>
<reference key="36">
    <citation type="journal article" date="2004" name="J. Mol. Biol.">
        <title>Two positively charged residues of phi29 DNA polymerase, conserved in protein-primed DNA polymerases, are involved in stabilisation of the incoming nucleotide.</title>
        <authorList>
            <person name="Truniger V."/>
            <person name="Lazaro J.M."/>
            <person name="Salas M."/>
        </authorList>
    </citation>
    <scope>MUTAGENESIS OF LYS-366 AND LYS-379</scope>
</reference>
<reference key="37">
    <citation type="journal article" date="2004" name="Nucleic Acids Res.">
        <title>Function of the C-terminus of phi29 DNA polymerase in DNA and terminal protein binding.</title>
        <authorList>
            <person name="Truniger V."/>
            <person name="Lazaro J.M."/>
            <person name="Salas M."/>
        </authorList>
    </citation>
    <scope>DOMAIN</scope>
</reference>
<reference key="38">
    <citation type="journal article" date="2005" name="Gene">
        <title>Involvement of the 'linker' region between the exonuclease and polymerization domains of phi29 DNA polymerase in DNA and TP binding.</title>
        <authorList>
            <person name="Truniger V."/>
            <person name="Bonnin A."/>
            <person name="Lazaro J.M."/>
            <person name="de Vega M."/>
            <person name="Salas M."/>
        </authorList>
    </citation>
    <scope>DOMAIN</scope>
    <scope>MUTAGENESIS OF ARG-187; THR-189; SER-192; LYS-196; PHE-198 AND LYS-206</scope>
</reference>
<reference key="39">
    <citation type="journal article" date="2005" name="Proc. Natl. Acad. Sci. U.S.A.">
        <title>A specific subdomain in phi29 DNA polymerase confers both processivity and strand-displacement capacity.</title>
        <authorList>
            <person name="Rodriguez I."/>
            <person name="Lazaro J.M."/>
            <person name="Blanco L."/>
            <person name="Kamtekar S."/>
            <person name="Berman A.J."/>
            <person name="Wang J."/>
            <person name="Steitz T.A."/>
            <person name="Salas M."/>
            <person name="de Vega M."/>
        </authorList>
    </citation>
    <scope>DOMAIN</scope>
</reference>
<reference key="40">
    <citation type="journal article" date="2007" name="Nucleic Acids Res.">
        <title>A highly conserved Tyrosine residue of family B DNA polymerases contributes to dictate translesion synthesis past 8-oxo-7,8-dihydro-2'-deoxyguanosine.</title>
        <authorList>
            <person name="de Vega M."/>
            <person name="Salas M."/>
        </authorList>
    </citation>
    <scope>MUTAGENESIS OF TYR-390</scope>
</reference>
<reference key="41">
    <citation type="journal article" date="2008" name="Proc. Natl. Acad. Sci. U.S.A.">
        <title>Phage phi29 and Nf terminal protein-priming domain specifies the internal template nucleotide to initiate DNA replication.</title>
        <authorList>
            <person name="Longas E."/>
            <person name="Villar L."/>
            <person name="Lazaro J.M."/>
            <person name="de Vega M."/>
            <person name="Salas M."/>
        </authorList>
    </citation>
    <scope>FUNCTION</scope>
</reference>
<reference key="42">
    <citation type="journal article" date="2009" name="J. Mol. Biol.">
        <title>Functional importance of bacteriophage phi29 DNA polymerase residue Tyr148 in primer-terminus stabilisation at the 3'-5' exonuclease active site.</title>
        <authorList>
            <person name="Perez-Arnaiz P."/>
            <person name="Lazaro J.M."/>
            <person name="Salas M."/>
            <person name="de Vega M."/>
        </authorList>
    </citation>
    <scope>MUTAGENESIS OF TYR-148</scope>
</reference>
<reference key="43">
    <citation type="journal article" date="2009" name="Nucleic Acids Res.">
        <title>Involvement of the TPR2 subdomain movement in the activities of phi29 DNA polymerase.</title>
        <authorList>
            <person name="Rodriguez I."/>
            <person name="Lazaro J.M."/>
            <person name="Salas M."/>
            <person name="de Vega M."/>
        </authorList>
    </citation>
    <scope>DOMAIN</scope>
</reference>
<reference key="44">
    <citation type="journal article" date="2010" name="J. Mol. Biol.">
        <title>phi29 DNA polymerase active site: role of residue Val250 as metal-dNTP complex ligand and in protein-primed initiation.</title>
        <authorList>
            <person name="Perez-Arnaiz P."/>
            <person name="Lazaro J.M."/>
            <person name="Salas M."/>
            <person name="de Vega M."/>
        </authorList>
    </citation>
    <scope>MUTAGENESIS OF VAL-250</scope>
</reference>
<reference key="45">
    <citation type="journal article" date="2012" name="Nucleic Acids Res.">
        <title>Involvement of residues of the Phi29 terminal protein intermediate and priming domains in the formation of a stable and functional heterodimer with the replicative DNA polymerase.</title>
        <authorList>
            <person name="del Prado A."/>
            <person name="Villar L."/>
            <person name="de Vega M."/>
            <person name="Salas M."/>
        </authorList>
    </citation>
    <scope>INTERACTION WITH THE PRIMER TERMINAL PROTEIN</scope>
</reference>
<reference key="46">
    <citation type="journal article" date="2013" name="PLoS ONE">
        <title>Dual role of phi29 DNA polymerase Lys529 in stabilisation of the DNA priming-terminus and the terminal protein-priming residue at the polymerisation site.</title>
        <authorList>
            <person name="del Prado A."/>
            <person name="Lazaro J.M."/>
            <person name="Villar L."/>
            <person name="Salas M."/>
            <person name="de Vega M."/>
        </authorList>
    </citation>
    <scope>MUTAGENESIS OF LYS-529</scope>
</reference>
<reference key="47">
    <citation type="journal article" date="2014" name="J. Biol. Chem.">
        <title>Dynamics of translocation and substrate binding in individual complexes formed with active site mutants of {phi}29 DNA polymerase.</title>
        <authorList>
            <person name="Dahl J.M."/>
            <person name="Wang H."/>
            <person name="Lazaro J.M."/>
            <person name="Salas M."/>
            <person name="Lieberman K.R."/>
        </authorList>
    </citation>
    <scope>MUTAGENESIS OF TYR-226 AND TYR-390</scope>
</reference>
<reference evidence="47 48" key="48">
    <citation type="journal article" date="2004" name="Mol. Cell">
        <title>Insights into strand displacement and processivity from the crystal structure of the protein-primed DNA polymerase of bacteriophage phi29.</title>
        <authorList>
            <person name="Kamtekar S."/>
            <person name="Berman A.J."/>
            <person name="Wang J."/>
            <person name="Lazaro J.M."/>
            <person name="de Vega M."/>
            <person name="Blanco L."/>
            <person name="Salas M."/>
            <person name="Steitz T.A."/>
        </authorList>
    </citation>
    <scope>X-RAY CRYSTALLOGRAPHY (2.35 ANGSTROMS)</scope>
</reference>
<reference evidence="49" key="49">
    <citation type="journal article" date="2005" name="Acta Crystallogr. D">
        <title>Correction of X-ray intensities from single crystals containing lattice-translocation defects.</title>
        <authorList>
            <person name="Wang J."/>
            <person name="Kamtekar S."/>
            <person name="Berman A.J."/>
            <person name="Steitz T.A."/>
        </authorList>
    </citation>
    <scope>X-RAY CRYSTALLOGRAPHY (2.20 ANGSTROMS) IN COMPLEX WITH MAGNESIUM</scope>
    <scope>COFACTOR</scope>
</reference>
<reference evidence="50" key="50">
    <citation type="journal article" date="2006" name="EMBO J.">
        <title>The phi29 DNA polymerase:protein-primer structure suggests a model for the initiation to elongation transition.</title>
        <authorList>
            <person name="Kamtekar S."/>
            <person name="Berman A.J."/>
            <person name="Wang J."/>
            <person name="Lazaro J.M."/>
            <person name="de Vega M."/>
            <person name="Blanco L."/>
            <person name="Salas M."/>
            <person name="Steitz T.A."/>
        </authorList>
    </citation>
    <scope>X-RAY CRYSTALLOGRAPHY (3.00 ANGSTROMS)</scope>
</reference>
<reference evidence="51 52 53 54" key="51">
    <citation type="journal article" date="2007" name="EMBO J.">
        <title>Structures of phi29 DNA polymerase complexed with substrate: the mechanism of translocation in B-family polymerases.</title>
        <authorList>
            <person name="Berman A.J."/>
            <person name="Kamtekar S."/>
            <person name="Goodman J.L."/>
            <person name="Lazaro J.M."/>
            <person name="de Vega M."/>
            <person name="Blanco L."/>
            <person name="Salas M."/>
            <person name="Steitz T.A."/>
        </authorList>
    </citation>
    <scope>X-RAY CRYSTALLOGRAPHY (1.60 ANGSTROMS) IN COMPLEX WITH MANGANESE AND TTP</scope>
    <scope>COFACTOR</scope>
</reference>
<evidence type="ECO:0000269" key="1">
    <source>
    </source>
</evidence>
<evidence type="ECO:0000269" key="2">
    <source>
    </source>
</evidence>
<evidence type="ECO:0000269" key="3">
    <source>
    </source>
</evidence>
<evidence type="ECO:0000269" key="4">
    <source>
    </source>
</evidence>
<evidence type="ECO:0000269" key="5">
    <source>
    </source>
</evidence>
<evidence type="ECO:0000269" key="6">
    <source>
    </source>
</evidence>
<evidence type="ECO:0000269" key="7">
    <source>
    </source>
</evidence>
<evidence type="ECO:0000269" key="8">
    <source>
    </source>
</evidence>
<evidence type="ECO:0000269" key="9">
    <source>
    </source>
</evidence>
<evidence type="ECO:0000269" key="10">
    <source>
    </source>
</evidence>
<evidence type="ECO:0000269" key="11">
    <source>
    </source>
</evidence>
<evidence type="ECO:0000269" key="12">
    <source>
    </source>
</evidence>
<evidence type="ECO:0000269" key="13">
    <source>
    </source>
</evidence>
<evidence type="ECO:0000269" key="14">
    <source>
    </source>
</evidence>
<evidence type="ECO:0000269" key="15">
    <source>
    </source>
</evidence>
<evidence type="ECO:0000269" key="16">
    <source>
    </source>
</evidence>
<evidence type="ECO:0000269" key="17">
    <source>
    </source>
</evidence>
<evidence type="ECO:0000269" key="18">
    <source>
    </source>
</evidence>
<evidence type="ECO:0000269" key="19">
    <source>
    </source>
</evidence>
<evidence type="ECO:0000269" key="20">
    <source>
    </source>
</evidence>
<evidence type="ECO:0000269" key="21">
    <source>
    </source>
</evidence>
<evidence type="ECO:0000269" key="22">
    <source>
    </source>
</evidence>
<evidence type="ECO:0000269" key="23">
    <source>
    </source>
</evidence>
<evidence type="ECO:0000269" key="24">
    <source>
    </source>
</evidence>
<evidence type="ECO:0000269" key="25">
    <source>
    </source>
</evidence>
<evidence type="ECO:0000269" key="26">
    <source>
    </source>
</evidence>
<evidence type="ECO:0000269" key="27">
    <source>
    </source>
</evidence>
<evidence type="ECO:0000269" key="28">
    <source>
    </source>
</evidence>
<evidence type="ECO:0000269" key="29">
    <source>
    </source>
</evidence>
<evidence type="ECO:0000269" key="30">
    <source>
    </source>
</evidence>
<evidence type="ECO:0000269" key="31">
    <source>
    </source>
</evidence>
<evidence type="ECO:0000269" key="32">
    <source>
    </source>
</evidence>
<evidence type="ECO:0000269" key="33">
    <source>
    </source>
</evidence>
<evidence type="ECO:0000269" key="34">
    <source>
    </source>
</evidence>
<evidence type="ECO:0000269" key="35">
    <source>
    </source>
</evidence>
<evidence type="ECO:0000269" key="36">
    <source>
    </source>
</evidence>
<evidence type="ECO:0000269" key="37">
    <source>
    </source>
</evidence>
<evidence type="ECO:0000269" key="38">
    <source>
    </source>
</evidence>
<evidence type="ECO:0000269" key="39">
    <source>
    </source>
</evidence>
<evidence type="ECO:0000269" key="40">
    <source>
    </source>
</evidence>
<evidence type="ECO:0000269" key="41">
    <source>
    </source>
</evidence>
<evidence type="ECO:0000269" key="42">
    <source>
    </source>
</evidence>
<evidence type="ECO:0000269" key="43">
    <source>
    </source>
</evidence>
<evidence type="ECO:0000269" key="44">
    <source>
    </source>
</evidence>
<evidence type="ECO:0000269" key="45">
    <source>
    </source>
</evidence>
<evidence type="ECO:0000305" key="46"/>
<evidence type="ECO:0007744" key="47">
    <source>
        <dbReference type="PDB" id="1XHX"/>
    </source>
</evidence>
<evidence type="ECO:0007744" key="48">
    <source>
        <dbReference type="PDB" id="1XHZ"/>
    </source>
</evidence>
<evidence type="ECO:0007744" key="49">
    <source>
        <dbReference type="PDB" id="1XI1"/>
    </source>
</evidence>
<evidence type="ECO:0007744" key="50">
    <source>
        <dbReference type="PDB" id="2EX3"/>
    </source>
</evidence>
<evidence type="ECO:0007744" key="51">
    <source>
        <dbReference type="PDB" id="2PY5"/>
    </source>
</evidence>
<evidence type="ECO:0007744" key="52">
    <source>
        <dbReference type="PDB" id="2PYJ"/>
    </source>
</evidence>
<evidence type="ECO:0007744" key="53">
    <source>
        <dbReference type="PDB" id="2PYL"/>
    </source>
</evidence>
<evidence type="ECO:0007744" key="54">
    <source>
        <dbReference type="PDB" id="2PZS"/>
    </source>
</evidence>
<evidence type="ECO:0007829" key="55">
    <source>
        <dbReference type="PDB" id="1XI1"/>
    </source>
</evidence>
<evidence type="ECO:0007829" key="56">
    <source>
        <dbReference type="PDB" id="2PY5"/>
    </source>
</evidence>
<evidence type="ECO:0007829" key="57">
    <source>
        <dbReference type="PDB" id="2PYJ"/>
    </source>
</evidence>
<evidence type="ECO:0007829" key="58">
    <source>
        <dbReference type="PDB" id="2PYL"/>
    </source>
</evidence>
<keyword id="KW-0002">3D-structure</keyword>
<keyword id="KW-0235">DNA replication</keyword>
<keyword id="KW-0238">DNA-binding</keyword>
<keyword id="KW-0239">DNA-directed DNA polymerase</keyword>
<keyword id="KW-0244">Early protein</keyword>
<keyword id="KW-0269">Exonuclease</keyword>
<keyword id="KW-0378">Hydrolase</keyword>
<keyword id="KW-0460">Magnesium</keyword>
<keyword id="KW-0479">Metal-binding</keyword>
<keyword id="KW-0540">Nuclease</keyword>
<keyword id="KW-0547">Nucleotide-binding</keyword>
<keyword id="KW-0548">Nucleotidyltransferase</keyword>
<keyword id="KW-1185">Reference proteome</keyword>
<keyword id="KW-0808">Transferase</keyword>
<keyword id="KW-1194">Viral DNA replication</keyword>
<dbReference type="EC" id="2.7.7.7" evidence="29"/>
<dbReference type="EC" id="3.1.11.-" evidence="28"/>
<dbReference type="EMBL" id="V01155">
    <property type="protein sequence ID" value="CAA24480.1"/>
    <property type="molecule type" value="Genomic_DNA"/>
</dbReference>
<dbReference type="EMBL" id="X53370">
    <property type="protein sequence ID" value="CAA37450.1"/>
    <property type="molecule type" value="Genomic_DNA"/>
</dbReference>
<dbReference type="EMBL" id="EU771092">
    <property type="protein sequence ID" value="ACE96023.1"/>
    <property type="status" value="ALT_INIT"/>
    <property type="molecule type" value="Genomic_DNA"/>
</dbReference>
<dbReference type="EMBL" id="X53371">
    <property type="protein sequence ID" value="CAA37451.1"/>
    <property type="molecule type" value="Genomic_DNA"/>
</dbReference>
<dbReference type="PIR" id="A04282">
    <property type="entry name" value="ERBP29"/>
</dbReference>
<dbReference type="PDB" id="1XHX">
    <property type="method" value="X-ray"/>
    <property type="resolution" value="2.35 A"/>
    <property type="chains" value="A/B/C/D=1-575"/>
</dbReference>
<dbReference type="PDB" id="1XHZ">
    <property type="method" value="X-ray"/>
    <property type="resolution" value="2.70 A"/>
    <property type="chains" value="A/B/C/D=1-575"/>
</dbReference>
<dbReference type="PDB" id="1XI1">
    <property type="method" value="X-ray"/>
    <property type="resolution" value="2.20 A"/>
    <property type="chains" value="A/B=1-575"/>
</dbReference>
<dbReference type="PDB" id="2EX3">
    <property type="method" value="X-ray"/>
    <property type="resolution" value="3.00 A"/>
    <property type="chains" value="A/C/E/G/I/K=1-575"/>
</dbReference>
<dbReference type="PDB" id="2PY5">
    <property type="method" value="X-ray"/>
    <property type="resolution" value="1.60 A"/>
    <property type="chains" value="A/B=1-575"/>
</dbReference>
<dbReference type="PDB" id="2PYJ">
    <property type="method" value="X-ray"/>
    <property type="resolution" value="2.03 A"/>
    <property type="chains" value="A/B=1-575"/>
</dbReference>
<dbReference type="PDB" id="2PYL">
    <property type="method" value="X-ray"/>
    <property type="resolution" value="2.20 A"/>
    <property type="chains" value="A=1-575"/>
</dbReference>
<dbReference type="PDB" id="2PZS">
    <property type="method" value="X-ray"/>
    <property type="resolution" value="2.60 A"/>
    <property type="chains" value="A/B/C/D=1-575"/>
</dbReference>
<dbReference type="PDBsum" id="1XHX"/>
<dbReference type="PDBsum" id="1XHZ"/>
<dbReference type="PDBsum" id="1XI1"/>
<dbReference type="PDBsum" id="2EX3"/>
<dbReference type="PDBsum" id="2PY5"/>
<dbReference type="PDBsum" id="2PYJ"/>
<dbReference type="PDBsum" id="2PYL"/>
<dbReference type="PDBsum" id="2PZS"/>
<dbReference type="SMR" id="P03680"/>
<dbReference type="KEGG" id="vg:6446511"/>
<dbReference type="BRENDA" id="2.7.7.7">
    <property type="organism ID" value="723"/>
</dbReference>
<dbReference type="EvolutionaryTrace" id="P03680"/>
<dbReference type="Proteomes" id="UP000001207">
    <property type="component" value="Genome"/>
</dbReference>
<dbReference type="GO" id="GO:0003677">
    <property type="term" value="F:DNA binding"/>
    <property type="evidence" value="ECO:0007669"/>
    <property type="project" value="UniProtKB-KW"/>
</dbReference>
<dbReference type="GO" id="GO:0003887">
    <property type="term" value="F:DNA-directed DNA polymerase activity"/>
    <property type="evidence" value="ECO:0007669"/>
    <property type="project" value="UniProtKB-KW"/>
</dbReference>
<dbReference type="GO" id="GO:0004527">
    <property type="term" value="F:exonuclease activity"/>
    <property type="evidence" value="ECO:0007669"/>
    <property type="project" value="UniProtKB-KW"/>
</dbReference>
<dbReference type="GO" id="GO:0046872">
    <property type="term" value="F:metal ion binding"/>
    <property type="evidence" value="ECO:0007669"/>
    <property type="project" value="UniProtKB-KW"/>
</dbReference>
<dbReference type="GO" id="GO:0001882">
    <property type="term" value="F:nucleoside binding"/>
    <property type="evidence" value="ECO:0007669"/>
    <property type="project" value="InterPro"/>
</dbReference>
<dbReference type="GO" id="GO:0000166">
    <property type="term" value="F:nucleotide binding"/>
    <property type="evidence" value="ECO:0007669"/>
    <property type="project" value="UniProtKB-KW"/>
</dbReference>
<dbReference type="GO" id="GO:0006260">
    <property type="term" value="P:DNA replication"/>
    <property type="evidence" value="ECO:0007669"/>
    <property type="project" value="UniProtKB-KW"/>
</dbReference>
<dbReference type="GO" id="GO:0039693">
    <property type="term" value="P:viral DNA genome replication"/>
    <property type="evidence" value="ECO:0000314"/>
    <property type="project" value="UniProtKB"/>
</dbReference>
<dbReference type="Gene3D" id="4.10.80.20">
    <property type="entry name" value="DNA polymerase, domain 5"/>
    <property type="match status" value="1"/>
</dbReference>
<dbReference type="Gene3D" id="4.10.80.30">
    <property type="entry name" value="DNA polymerase, domain 6"/>
    <property type="match status" value="1"/>
</dbReference>
<dbReference type="Gene3D" id="1.10.287.690">
    <property type="entry name" value="Helix hairpin bin"/>
    <property type="match status" value="1"/>
</dbReference>
<dbReference type="Gene3D" id="3.90.1600.10">
    <property type="entry name" value="Palm domain of DNA polymerase"/>
    <property type="match status" value="1"/>
</dbReference>
<dbReference type="Gene3D" id="3.30.420.10">
    <property type="entry name" value="Ribonuclease H-like superfamily/Ribonuclease H"/>
    <property type="match status" value="1"/>
</dbReference>
<dbReference type="Gene3D" id="3.30.1770.10">
    <property type="entry name" value="TPR 1 domain of DNA polymerase"/>
    <property type="match status" value="1"/>
</dbReference>
<dbReference type="InterPro" id="IPR006172">
    <property type="entry name" value="DNA-dir_DNA_pol_B"/>
</dbReference>
<dbReference type="InterPro" id="IPR017964">
    <property type="entry name" value="DNA-dir_DNA_pol_B_CS"/>
</dbReference>
<dbReference type="InterPro" id="IPR004868">
    <property type="entry name" value="DNA-dir_DNA_pol_B_mt/vir"/>
</dbReference>
<dbReference type="InterPro" id="IPR014416">
    <property type="entry name" value="DNA-dir_DNA_polB_phi29_vir"/>
</dbReference>
<dbReference type="InterPro" id="IPR043502">
    <property type="entry name" value="DNA/RNA_pol_sf"/>
</dbReference>
<dbReference type="InterPro" id="IPR023211">
    <property type="entry name" value="DNA_pol_palm_dom_sf"/>
</dbReference>
<dbReference type="InterPro" id="IPR012337">
    <property type="entry name" value="RNaseH-like_sf"/>
</dbReference>
<dbReference type="InterPro" id="IPR036397">
    <property type="entry name" value="RNaseH_sf"/>
</dbReference>
<dbReference type="PANTHER" id="PTHR33568">
    <property type="entry name" value="DNA POLYMERASE"/>
    <property type="match status" value="1"/>
</dbReference>
<dbReference type="PANTHER" id="PTHR33568:SF3">
    <property type="entry name" value="DNA-DIRECTED DNA POLYMERASE"/>
    <property type="match status" value="1"/>
</dbReference>
<dbReference type="Pfam" id="PF03175">
    <property type="entry name" value="DNA_pol_B_2"/>
    <property type="match status" value="1"/>
</dbReference>
<dbReference type="PIRSF" id="PIRSF004178">
    <property type="entry name" value="Dpol_Bac_phage"/>
    <property type="match status" value="1"/>
</dbReference>
<dbReference type="PRINTS" id="PR00106">
    <property type="entry name" value="DNAPOLB"/>
</dbReference>
<dbReference type="SMART" id="SM00486">
    <property type="entry name" value="POLBc"/>
    <property type="match status" value="1"/>
</dbReference>
<dbReference type="SUPFAM" id="SSF56672">
    <property type="entry name" value="DNA/RNA polymerases"/>
    <property type="match status" value="1"/>
</dbReference>
<dbReference type="SUPFAM" id="SSF53098">
    <property type="entry name" value="Ribonuclease H-like"/>
    <property type="match status" value="1"/>
</dbReference>
<dbReference type="PROSITE" id="PS00116">
    <property type="entry name" value="DNA_POLYMERASE_B"/>
    <property type="match status" value="1"/>
</dbReference>
<accession>P03680</accession>
<accession>B3VMN6</accession>
<accession>Q38545</accession>
<sequence>MKHMPRKMYSCDFETTTKVEDCRVWAYGYMNIEDHSEYKIGNSLDEFMAWVLKVQADLYFHNLKFDGAFIINWLERNGFKWSADGLPNTYNTIISRMGQWYMIDICLGYKGKRKIHTVIYDSLKKLPFPVKKIAKDFKLTVLKGDIDYHKERPVGYKITPEEYAYIKNDIQIIAEALLIQFKQGLDRMTAGSDSLKGFKDIITTKKFKKVFPTLSLGLDKEVRYAYRGGFTWLNDRFKEKEIGEGMVFDVNSLYPAQMYSRLLPYGEPIVFEGKYVWDEDYPLHIQHIRCEFELKEGYIPTIQIKRSRFYKGNEYLKSSGGEIADLWLSNVDLELMKEHYDLYNVEYISGLKFKATTGLFKDFIDKWTYIKTTSEGAIKQLAKLMLNSLYGKFASNPDVTGKVPYLKENGALGFRLGEEETKDPVYTPMGVFITAWARYTTITAAQACYDRIIYCDTDSIHLTGTEIPDVIKDIVDPKKLGYWAHESTFKRAKYLRQKTYIQDIYMKEVDGKLVEGSPDDYTDIKFSVKCAGMTDKIKKEVTFENFKVGFSRKMKPKPVQVPGGVVLVDDTFTIK</sequence>
<feature type="chain" id="PRO_0000046542" description="DNA polymerase">
    <location>
        <begin position="1"/>
        <end position="575"/>
    </location>
</feature>
<feature type="region of interest" description="3'-5' exonuclease and strand displacement activities" evidence="37">
    <location>
        <begin position="1"/>
        <end position="191"/>
    </location>
</feature>
<feature type="region of interest" description="Involved in DNA-binding, coordination between DNA synthesis and degradation and TP interaction" evidence="12 38 45">
    <location>
        <begin position="192"/>
        <end position="229"/>
    </location>
</feature>
<feature type="region of interest" description="Initiation, polymerization and pyrophosphorolytic activities" evidence="37">
    <location>
        <begin position="230"/>
        <end position="562"/>
    </location>
</feature>
<feature type="region of interest" description="TPR2" evidence="13">
    <location>
        <begin position="398"/>
        <end position="420"/>
    </location>
</feature>
<feature type="region of interest" description="Involved in DNA-binding and TP interaction" evidence="10">
    <location>
        <begin position="563"/>
        <end position="575"/>
    </location>
</feature>
<feature type="short sequence motif" description="YCDTD" evidence="18">
    <location>
        <begin position="454"/>
        <end position="458"/>
    </location>
</feature>
<feature type="binding site" evidence="49">
    <location>
        <position position="145"/>
    </location>
    <ligand>
        <name>Mg(2+)</name>
        <dbReference type="ChEBI" id="CHEBI:18420"/>
        <label>1</label>
    </ligand>
</feature>
<feature type="binding site" evidence="49">
    <location>
        <position position="169"/>
    </location>
    <ligand>
        <name>Mg(2+)</name>
        <dbReference type="ChEBI" id="CHEBI:18420"/>
        <label>1</label>
    </ligand>
</feature>
<feature type="binding site" evidence="32 52">
    <location>
        <position position="249"/>
    </location>
    <ligand>
        <name>Mg(2+)</name>
        <dbReference type="ChEBI" id="CHEBI:18420"/>
        <label>2</label>
        <note>catalytic</note>
    </ligand>
</feature>
<feature type="binding site" evidence="22 52">
    <location>
        <position position="250"/>
    </location>
    <ligand>
        <name>Mg(2+)</name>
        <dbReference type="ChEBI" id="CHEBI:18420"/>
        <label>2</label>
        <note>catalytic</note>
    </ligand>
</feature>
<feature type="binding site" evidence="53">
    <location>
        <position position="254"/>
    </location>
    <ligand>
        <name>5-methyl-UTP</name>
        <dbReference type="ChEBI" id="CHEBI:63527"/>
    </ligand>
</feature>
<feature type="binding site" evidence="53">
    <location>
        <position position="371"/>
    </location>
    <ligand>
        <name>5-methyl-UTP</name>
        <dbReference type="ChEBI" id="CHEBI:63527"/>
    </ligand>
</feature>
<feature type="binding site" evidence="53">
    <location>
        <position position="383"/>
    </location>
    <ligand>
        <name>5-methyl-UTP</name>
        <dbReference type="ChEBI" id="CHEBI:63527"/>
    </ligand>
</feature>
<feature type="binding site" evidence="43">
    <location>
        <position position="456"/>
    </location>
    <ligand>
        <name>Mg(2+)</name>
        <dbReference type="ChEBI" id="CHEBI:18420"/>
        <label>2</label>
        <note>catalytic</note>
    </ligand>
</feature>
<feature type="binding site" evidence="53">
    <location>
        <position position="458"/>
    </location>
    <ligand>
        <name>5-methyl-UTP</name>
        <dbReference type="ChEBI" id="CHEBI:63527"/>
    </ligand>
</feature>
<feature type="binding site" evidence="52">
    <location>
        <position position="458"/>
    </location>
    <ligand>
        <name>Mg(2+)</name>
        <dbReference type="ChEBI" id="CHEBI:18420"/>
        <label>2</label>
        <note>catalytic</note>
    </ligand>
</feature>
<feature type="site" description="Essential for 3'-5' exonucleolysis" evidence="28 33">
    <location>
        <position position="12"/>
    </location>
</feature>
<feature type="site" description="Essential for 3'-5' exonucleolysis" evidence="28 33">
    <location>
        <position position="14"/>
    </location>
</feature>
<feature type="site" description="Involved in proofreading function by stabilization of the frayed primer-terminus at the 3'-5' exonuclease active site" evidence="36">
    <location>
        <position position="15"/>
    </location>
</feature>
<feature type="site" description="Interaction with the primer terminal protein" evidence="3">
    <location>
        <position position="59"/>
    </location>
</feature>
<feature type="site" description="Interaction with the primer terminal protein" evidence="3">
    <location>
        <position position="61"/>
    </location>
</feature>
<feature type="site" description="Involved in proofreading function by stabilization of the frayed primer-terminus at the 3'-5' exonuclease active site" evidence="36">
    <location>
        <position position="62"/>
    </location>
</feature>
<feature type="site" description="Binds ssDNA; Essential for 3'-5' exonucleolysis" evidence="44">
    <location>
        <position position="65"/>
    </location>
</feature>
<feature type="site" description="Essential for 3'-5' exonucleolysis" evidence="28 33">
    <location>
        <position position="66"/>
    </location>
</feature>
<feature type="site" description="Interaction with the primer terminal protein" evidence="3">
    <location>
        <position position="69"/>
    </location>
</feature>
<feature type="site" description="Involved in binding template-primer structures" evidence="33">
    <location>
        <position position="93"/>
    </location>
</feature>
<feature type="site" description="Binds ssDNA; Essential for 3'-5' exonucleolysis" evidence="44">
    <location>
        <position position="122"/>
    </location>
</feature>
<feature type="site" description="Binds ssDNA; Essential for 3'-5' exonucleolysis" evidence="44">
    <location>
        <position position="123"/>
    </location>
</feature>
<feature type="site" description="Involved in the stabilization of the frayed 3' terminus at the exonuclease active site" evidence="21">
    <location>
        <position position="148"/>
    </location>
</feature>
<feature type="site" description="Probably involved in binding template-primer structures" evidence="32">
    <location>
        <position position="252"/>
    </location>
</feature>
<feature type="site" description="Probably involved in nucleotide binding selection" evidence="35">
    <location>
        <position position="254"/>
    </location>
</feature>
<feature type="site" description="Binds ssDNA; Essential for 3'-5' exonucleolysis" evidence="36">
    <location>
        <position position="356"/>
    </location>
</feature>
<feature type="site" description="Involved in the binding of DNA and dNTP" evidence="4">
    <location>
        <position position="364"/>
    </location>
</feature>
<feature type="site" description="Stabilization of the incoming nucleotide" evidence="9">
    <location>
        <position position="366"/>
    </location>
</feature>
<feature type="site" description="Interacts with the phosphate groups of the incoming nucleotide" evidence="4">
    <location>
        <position position="371"/>
    </location>
</feature>
<feature type="site" description="Stabilization of the incoming nucleotide" evidence="9">
    <location>
        <position position="379"/>
    </location>
</feature>
<feature type="site" description="Probably involved in nucleotide binding selection" evidence="40">
    <location>
        <position position="383"/>
    </location>
</feature>
<feature type="site" description="Probably involved in positioning the templating nucleotide at the polymerization active site and in controlling nucleotide insertion fidelity" evidence="7">
    <location>
        <position position="384"/>
    </location>
</feature>
<feature type="site" description="Probably involved in binding template-primer structures" evidence="33">
    <location>
        <position position="387"/>
    </location>
</feature>
<feature type="site" description="Probably involved in nucleotide binding selection" evidence="35">
    <location>
        <position position="390"/>
    </location>
</feature>
<feature type="site" description="Probably involved in binding template-primer structures" evidence="33">
    <location>
        <position position="391"/>
    </location>
</feature>
<feature type="site" description="Binds ssDNA; Essential for 3'-5' exonucleolysis" evidence="36">
    <location>
        <position position="420"/>
    </location>
</feature>
<feature type="site" description="Probably involved in binding template-primer structures" evidence="31">
    <location>
        <position position="434"/>
    </location>
</feature>
<feature type="site" description="Probably involved in binding template-primer structures" evidence="31">
    <location>
        <position position="438"/>
    </location>
</feature>
<feature type="site" description="Probably involved in binding template-primer structures" evidence="30">
    <location>
        <position position="498"/>
    </location>
</feature>
<feature type="site" description="Probably involved in binding template-primer structures" evidence="30">
    <location>
        <position position="500"/>
    </location>
</feature>
<feature type="site" description="Stabilizes the primer-terminus at the polymerization active site and contributes to the coordination between the exonuclease and polymerazation activities" evidence="25">
    <location>
        <position position="529"/>
    </location>
</feature>
<feature type="sequence variant" description="In mutant TS2(24).">
    <original>A</original>
    <variation>R</variation>
    <location>
        <position position="176"/>
    </location>
</feature>
<feature type="sequence variant" description="In mutant TS2(24).">
    <original>A</original>
    <variation>V</variation>
    <location>
        <position position="355"/>
    </location>
</feature>
<feature type="mutagenesis site" description="Strong loss of 3'-5' exonucleolysis." evidence="8 28">
    <original>D</original>
    <variation>A</variation>
    <location>
        <position position="12"/>
    </location>
</feature>
<feature type="mutagenesis site" description="Strong loss of 3'-5' exonucleolysis." evidence="8 28">
    <original>E</original>
    <variation>A</variation>
    <location>
        <position position="14"/>
    </location>
</feature>
<feature type="mutagenesis site" description="95% loss of ssDNA-binding. Decreased in fidelity of DNA replication." evidence="36">
    <original>T</original>
    <variation>I</variation>
    <location>
        <position position="15"/>
    </location>
</feature>
<feature type="mutagenesis site" description="Almost no effect on replication activity. About 20% loss of TP-DNA initiation, 20% loss of TP-DNA replication and 10% loss of TP-DNA amplification. Complete loss of interaction with TP." evidence="3">
    <original>Y</original>
    <variation>F</variation>
    <location>
        <position position="59"/>
    </location>
</feature>
<feature type="mutagenesis site" description="3 fold decrease in replication activity. About 80% loss of TP-DNA initiation, 70% loss of TP-DNA replication and 97% loss of TP-DNA amplification. Complete loss of interaction with TP." evidence="3">
    <original>Y</original>
    <variation>L</variation>
    <location>
        <position position="59"/>
    </location>
</feature>
<feature type="mutagenesis site" description="3 fold decrease in replication activity. About 75% loss of TP-DNA initiation, complete loss of TP-DNA replication and complete loss of TP-DNA amplification." evidence="3">
    <original>Y</original>
    <variation>R</variation>
    <location>
        <position position="59"/>
    </location>
</feature>
<feature type="mutagenesis site" description="5 fold decrease in replication activity. About 85% loss of TP-DNA initiation, 80% loss of TP-DNA replication and complete loss of TP-DNA amplification. Complete loss of interaction with TP." evidence="3">
    <original>H</original>
    <variation>L</variation>
    <location>
        <position position="61"/>
    </location>
</feature>
<feature type="mutagenesis site" description="100 fold decrease in replication activity. Complete loss of interaction with TP." evidence="3">
    <original>H</original>
    <variation>R</variation>
    <location>
        <position position="61"/>
    </location>
</feature>
<feature type="mutagenesis site" description="88% loss of ssDNA-binding. Decreased in fidelity of DNA replication." evidence="36">
    <original>N</original>
    <variation>D</variation>
    <variation>H</variation>
    <location>
        <position position="62"/>
    </location>
</feature>
<feature type="mutagenesis site" description="Loss of capacity to interact with a DNA primer/template structure." evidence="44">
    <original>F</original>
    <variation>S</variation>
    <location>
        <position position="65"/>
    </location>
</feature>
<feature type="mutagenesis site" description="Strong loss of 3'-5' exonucleolysis." evidence="8 28">
    <original>D</original>
    <variation>A</variation>
    <location>
        <position position="66"/>
    </location>
</feature>
<feature type="mutagenesis site" description="2 fold decrease in replication activity. About 50% loss of TP-DNA initiation, 40% loss of TP-DNA replication and 60% loss of TP-DNA amplification. Complete loss of interaction with TP." evidence="3">
    <original>F</original>
    <variation>S</variation>
    <location>
        <position position="69"/>
    </location>
</feature>
<feature type="mutagenesis site" description="2 fold decrease in replication activity. About 80% loss of TP-DNA initiation, 50% loss of TP-DNA replication and almost 95% loss of TP-DNA. Complete loss of interaction with TP amplification." evidence="3">
    <original>F</original>
    <variation>Y</variation>
    <location>
        <position position="69"/>
    </location>
</feature>
<feature type="mutagenesis site" description="Loss of capacity to interact with a DNA primer/template structure." evidence="44">
    <original>S</original>
    <variation>T</variation>
    <location>
        <position position="122"/>
    </location>
</feature>
<feature type="mutagenesis site" description="Loss of capacity to interact with a DNA primer/template structure." evidence="44">
    <original>L</original>
    <variation>N</variation>
    <location>
        <position position="123"/>
    </location>
</feature>
<feature type="mutagenesis site" description="Slight loss of interaction with TP." evidence="6">
    <original>F</original>
    <variation>A</variation>
    <location>
        <position position="128"/>
    </location>
</feature>
<feature type="mutagenesis site" description="Almost complete loss of interaction with TP." evidence="6">
    <original>F</original>
    <variation>Y</variation>
    <location>
        <position position="128"/>
    </location>
</feature>
<feature type="mutagenesis site" description="Strong loss of 3'-5' exonuclease, proofreading and strand-displacement activities." evidence="41">
    <original>K</original>
    <variation>I</variation>
    <variation>R</variation>
    <location>
        <position position="143"/>
    </location>
</feature>
<feature type="mutagenesis site" description="Reduced capacity to stabilize the binding of the primer terminus at the 3'-5' exonuclease active site." evidence="21">
    <original>Y</original>
    <variation>A</variation>
    <location>
        <position position="148"/>
    </location>
</feature>
<feature type="mutagenesis site" description="Strong loss of 3'-5' exonucleolysis." evidence="8">
    <original>D</original>
    <variation>A</variation>
    <location>
        <position position="169"/>
    </location>
</feature>
<feature type="mutagenesis site" description="No effect on DNA-binding, TP binding and replication/amplification." evidence="12">
    <original>R</original>
    <variation>K</variation>
    <location>
        <position position="187"/>
    </location>
</feature>
<feature type="mutagenesis site" description="No effect on DNA-binding, TP binding and replication/amplification." evidence="12">
    <original>T</original>
    <variation>A</variation>
    <location>
        <position position="189"/>
    </location>
</feature>
<feature type="mutagenesis site" description="Loss of DNA-binding. Reduced TP binding. 25% loss of replication and almost complete loss of amplification." evidence="12">
    <original>S</original>
    <variation>I</variation>
    <location>
        <position position="192"/>
    </location>
</feature>
<feature type="mutagenesis site" description="Loss of DNA-binding. No effect on TP binding. 50% loss of replication/amplification." evidence="12">
    <original>S</original>
    <variation>N</variation>
    <location>
        <position position="192"/>
    </location>
</feature>
<feature type="mutagenesis site" description="Loss of DNA-binding. Reduced TP binding. 25% loss of replication and almost complete loss of amplification. 6-fold reduced 3'-5' exonucleolysis." evidence="12">
    <original>K</original>
    <variation>I</variation>
    <location>
        <position position="196"/>
    </location>
</feature>
<feature type="mutagenesis site" description="Slight loss of DNA-binding. No loss of replication and amplification." evidence="12">
    <original>K</original>
    <variation>R</variation>
    <location>
        <position position="196"/>
    </location>
</feature>
<feature type="mutagenesis site" description="Loss of DNA-binding. Reduced TP binding. 25% loss of replication and almost complete loss of amplification. 6-fold reduced 3'-5' exonucleolysis." evidence="12">
    <original>F</original>
    <variation>V</variation>
    <location>
        <position position="198"/>
    </location>
</feature>
<feature type="mutagenesis site" description="No effect on DNA-binding. Reduced TP binding. 70% loss of replication and 20% loss of amplification." evidence="12">
    <original>K</original>
    <variation>I</variation>
    <location>
        <position position="206"/>
    </location>
</feature>
<feature type="mutagenesis site" description="Favored exonucleolysis (low pol/exo ratio)." evidence="38 45">
    <original>R</original>
    <variation>I</variation>
    <location>
        <position position="223"/>
    </location>
</feature>
<feature type="mutagenesis site" description="Favored polymerization (high pol/exo ratio). decrease in forward and reverse rates of translocation. Increased affinity for dNTP and for pyrophosphate in the pre-translocation state." evidence="26 38 45">
    <original>Y</original>
    <variation>F</variation>
    <location>
        <position position="226"/>
    </location>
</feature>
<feature type="mutagenesis site" description="Favored exonucleolysis. Complete loss of polymerization." evidence="38 45">
    <original>Y</original>
    <variation>S</variation>
    <location>
        <position position="226"/>
    </location>
</feature>
<feature type="mutagenesis site" description="Favored exonucleolysis (low pol/exo ratio)." evidence="38 45">
    <original>R</original>
    <variation>I</variation>
    <location>
        <position position="227"/>
    </location>
</feature>
<feature type="mutagenesis site" description="No effect on the pol/exo ratio." evidence="45">
    <original>R</original>
    <variation>K</variation>
    <location>
        <position position="227"/>
    </location>
</feature>
<feature type="mutagenesis site" description="Favored polymerization (high pol/exo ratio)." evidence="38 45">
    <original>G</original>
    <variation>A</variation>
    <location>
        <position position="228"/>
    </location>
</feature>
<feature type="mutagenesis site" description="Favored exonucleolysis (low pol/exo ratio)." evidence="38 45">
    <original>G</original>
    <variation>A</variation>
    <location>
        <position position="229"/>
    </location>
</feature>
<feature type="mutagenesis site" description="Favored exonucleolysis. Complete loss of polymerization." evidence="38 45">
    <original>G</original>
    <variation>D</variation>
    <location>
        <position position="229"/>
    </location>
</feature>
<feature type="mutagenesis site" description="Favored polymerization (high pol/exo ratio)." evidence="38 45">
    <original>F</original>
    <variation>A</variation>
    <location>
        <position position="230"/>
    </location>
</feature>
<feature type="mutagenesis site" description="Favored exonucleolysis (low pol/exo ratio)." evidence="38 45">
    <original>F</original>
    <variation>S</variation>
    <location>
        <position position="230"/>
    </location>
</feature>
<feature type="mutagenesis site" description="No effect on the pol/exo ratio." evidence="45">
    <original>F</original>
    <variation>Y</variation>
    <location>
        <position position="230"/>
    </location>
</feature>
<feature type="mutagenesis site" description="Complete loss of DNA polymerase activity. Slight decrease in template-primer binding. No effect on 3' to 5' exonucleolysis." evidence="32">
    <original>D</original>
    <variation>E</variation>
    <location>
        <position position="249"/>
    </location>
</feature>
<feature type="mutagenesis site" description="No effect on TP-DNA replication." evidence="22">
    <original>V</original>
    <variation>A</variation>
    <location>
        <position position="250"/>
    </location>
</feature>
<feature type="mutagenesis site" description="Complete loss of TP-DNA replication." evidence="22">
    <original>V</original>
    <variation>F</variation>
    <location>
        <position position="250"/>
    </location>
</feature>
<feature type="mutagenesis site" description="No effect on TP-DNA replication." evidence="22">
    <original>N</original>
    <variation>D</variation>
    <location>
        <position position="251"/>
    </location>
</feature>
<feature type="mutagenesis site" description="40% loss of DNA polymerase activity. No effect on translocation or stabilization of the incorporated nucIeotide. No effect on 3' to 5' exonucleolysis." evidence="32">
    <original>S</original>
    <variation>G</variation>
    <location>
        <position position="252"/>
    </location>
</feature>
<feature type="mutagenesis site" description="Complete loss of DNA polymerase activity. Drastic loss of template-primer binding. No effect on 3' to 5' exonucleolysis and interaction with the TP primer." evidence="32">
    <original>S</original>
    <variation>R</variation>
    <location>
        <position position="252"/>
    </location>
</feature>
<feature type="mutagenesis site" description="30% loss of DNA polymerase activity. No effect on translocation or stabilization of the incorporated nucIeotide. No effect on 3' to 5' exonucleolysis." evidence="32">
    <original>L</original>
    <variation>V</variation>
    <location>
        <position position="253"/>
    </location>
</feature>
<feature type="mutagenesis site" description="Decreased dNTP binding affinity. 10-fold reduced affinity for the correct nucleotide." evidence="35">
    <original>Y</original>
    <variation>F</variation>
    <location>
        <position position="254"/>
    </location>
</feature>
<feature type="mutagenesis site" description="Loss of discrimination for rNTPs over dNTPs." evidence="1">
    <original>Y</original>
    <variation>V</variation>
    <location>
        <position position="254"/>
    </location>
</feature>
<feature type="mutagenesis site" description="30% loss of DNA polymerase activity. No effect on translocation or stabilization of the incorporated nucIeotide. No effect on 3' to 5' exonucleolysis." evidence="32">
    <original>P</original>
    <variation>S</variation>
    <location>
        <position position="255"/>
    </location>
</feature>
<feature type="mutagenesis site" description="Partial loss of hability to stably bind the DNA substrate." evidence="4">
    <original>I</original>
    <variation>Q</variation>
    <location>
        <position position="364"/>
    </location>
</feature>
<feature type="mutagenesis site" description="Complete loss of hability to stably bind the DNA substrate." evidence="4">
    <original>I</original>
    <variation>R</variation>
    <location>
        <position position="364"/>
    </location>
</feature>
<feature type="mutagenesis site" description="Slight decrease in DNA-binding capacity. No effect on polymerisation activity, except that it is reduced in the absence of a DNA template. Reduced affinity for the initiating nucleotide. 3 fold reduction of the initiation activity in the presence of p6." evidence="9">
    <original>K</original>
    <variation>T</variation>
    <location>
        <position position="366"/>
    </location>
</feature>
<feature type="mutagenesis site" description="Strong decrease in the affinity for dNTPs and pyrophosphorolytic activity. No effect on exonucleolysis." evidence="4">
    <original>K</original>
    <variation>T</variation>
    <location>
        <position position="371"/>
    </location>
</feature>
<feature type="mutagenesis site" description="Slight increase in DNA-binding capacity. Reduced affinity for the initiating nucleotide." evidence="9">
    <original>K</original>
    <variation>T</variation>
    <location>
        <position position="379"/>
    </location>
</feature>
<feature type="mutagenesis site" description="Complete loss of incorporation of dNTP substrates using either DNA or TP as primer. No effect on 3' to 5' exonucleolysis." evidence="40">
    <original>K</original>
    <variation>P</variation>
    <location>
        <position position="383"/>
    </location>
</feature>
<feature type="mutagenesis site" description="Strong loss of ability to use dNTPs in both processive and non-processive DNA synthesis. Impaired progression from protein-primed initiation to DNA elongation. No effect on 3' to 5' exonucleolysis." evidence="40">
    <original>K</original>
    <variation>R</variation>
    <location>
        <position position="383"/>
    </location>
</feature>
<feature type="mutagenesis site" description="Reduced nucleotide insertion fidelity during DNA-primed polymerization and protein-primed initiation. No effect on the affinity for the different dNTPs." evidence="7">
    <original>L</original>
    <variation>R</variation>
    <location>
        <position position="384"/>
    </location>
</feature>
<feature type="mutagenesis site" description="3-fold higher Km value for dATP and more than 11-fold lower Vmax value than the wild-type enzyme in the initiation reaction. Impaired in enzyme-DNA translocation." evidence="33">
    <original>N</original>
    <variation>Y</variation>
    <location>
        <position position="387"/>
    </location>
</feature>
<feature type="mutagenesis site" description="No effect on initiation and polymerization activities. Increased efficiency of dNTP incorporation in non-templated reactions." evidence="33">
    <original>S</original>
    <variation>G</variation>
    <location>
        <position position="388"/>
    </location>
</feature>
<feature type="mutagenesis site" description="Decreased dNTP binding affinity in the post-translocation state. 4.6-fold reduced affinity for the correct nucleotide." evidence="26 35">
    <original>Y</original>
    <variation>F</variation>
    <location>
        <position position="390"/>
    </location>
</feature>
<feature type="mutagenesis site" description="Decreased dNTP binding affinity. 14-fold reduced affinity for the correct nucleotide. Loss of discrimination against dA insertion opposite 8oxodG." evidence="17 35">
    <original>Y</original>
    <variation>S</variation>
    <location>
        <position position="390"/>
    </location>
</feature>
<feature type="mutagenesis site" description="Complete loss of template-primer binding." evidence="33">
    <original>G</original>
    <variation>D</variation>
    <location>
        <position position="391"/>
    </location>
</feature>
<feature type="mutagenesis site" description="50% loss of exonuclease activity. 80% loss of processivity. No effect on DNA polymerase/DNA complex formation." evidence="5">
    <original>K</original>
    <variation>Q</variation>
    <location>
        <position position="392"/>
    </location>
</feature>
<feature type="mutagenesis site" description="90% loss of exonuclease activity. 80% loss of processivity. No effect on DNA polymerase/DNA complex formation." evidence="5">
    <original>K</original>
    <variation>R</variation>
    <location>
        <position position="392"/>
    </location>
</feature>
<feature type="mutagenesis site" description="Severe decrease in initial binding to template-primer DNA molecules." evidence="33">
    <original>F</original>
    <variation>Y</variation>
    <location>
        <position position="393"/>
    </location>
</feature>
<feature type="mutagenesis site" description="Complete loss of TP-dAMP formation. Almost complete loss of DNA polymerization." evidence="31">
    <original>T</original>
    <variation>N</variation>
    <location>
        <position position="434"/>
    </location>
</feature>
<feature type="mutagenesis site" description="No effect on TP-dAMP formation. 20% loss of DNA polymerization." evidence="31">
    <original>A</original>
    <variation>G</variation>
    <location>
        <position position="437"/>
    </location>
</feature>
<feature type="mutagenesis site" description="Complete loss of TP-dAMP formation. Almost complete loss of DNA polymerization." evidence="31">
    <original>R</original>
    <variation>I</variation>
    <location>
        <position position="438"/>
    </location>
</feature>
<feature type="mutagenesis site" description="Complete loss of TP-dAMP formation. 30% loss of DNA polymerization." evidence="31">
    <original>R</original>
    <variation>K</variation>
    <location>
        <position position="438"/>
    </location>
</feature>
<feature type="mutagenesis site" description="No effect on the formation of the covalent complex between the TP and 5'-dAMP. Loss of replication of a p3-DNA complex or a primed M13 DNA. Increased 3'-5' exonucleolysis." evidence="23">
    <original>Y</original>
    <variation>F</variation>
    <location>
        <position position="454"/>
    </location>
</feature>
<feature type="mutagenesis site" description="65% loss of formation of the covalent complex between the TP and 5'-dAMP. Increased 3'-5' exonucleolysis." evidence="23">
    <original>C</original>
    <variation>G</variation>
    <location>
        <position position="455"/>
    </location>
</feature>
<feature type="mutagenesis site" description="50% loss of synthetic activities, TP-primed initiation and DNA-primed polymerization. When polymerization requires an efficient translocation along the template, catalytic efficiency is strongly reduced. 90% loss of formation of the covalent complex between the TP and 5'-dAMP. Increased 3'-5' exonucleolysis." evidence="23 43">
    <original>D</original>
    <variation>G</variation>
    <location>
        <position position="456"/>
    </location>
</feature>
<feature type="mutagenesis site" description="Complete loss of initiation and polymerization activities. Severe loss of protein-priming activity. Increased 3'-5' exonucleolysis." evidence="23">
    <original>T</original>
    <variation>P</variation>
    <location>
        <position position="457"/>
    </location>
</feature>
<feature type="mutagenesis site" description="Complete loss of initiation and polymerization activities. Severe loss of protein-priming activity. Increased 3'-5' exonucleolysis." evidence="23">
    <original>D</original>
    <variation>G</variation>
    <location>
        <position position="458"/>
    </location>
</feature>
<feature type="mutagenesis site" description="Strong decrease in DNA polymerization activity. Loss of binding to a primer-template DNA. Increased 3'-5' exonucleolysis." evidence="30">
    <original>K</original>
    <variation>R</variation>
    <location>
        <position position="498"/>
    </location>
</feature>
<feature type="mutagenesis site" description="Strong decrease in initiation and DNA polymerization activities. Loss of binding to a primer-template DNA. Increased 3'-5' exonucleolysis." evidence="30">
    <original>K</original>
    <variation>T</variation>
    <location>
        <position position="498"/>
    </location>
</feature>
<feature type="mutagenesis site" description="Strong decrease in DNA polymerization activity and interaction with primer-template DNA. Increased 3'-5' exonucleolysis." evidence="30">
    <original>Y</original>
    <variation>S</variation>
    <location>
        <position position="500"/>
    </location>
</feature>
<feature type="mutagenesis site" description="Increased exonuclease activity and loss of primer elongation. Deficient in nucleotide incorporation." evidence="25">
    <original>K</original>
    <variation>A</variation>
    <location>
        <position position="529"/>
    </location>
</feature>
<feature type="mutagenesis site" description="Increased exonuclease activity and complete loss of primer elongation." evidence="25">
    <original>K</original>
    <variation>E</variation>
    <location>
        <position position="529"/>
    </location>
</feature>
<feature type="sequence conflict" description="In Ref. 4; CAA37450." evidence="46" ref="4">
    <original>A</original>
    <variation>V</variation>
    <location>
        <position position="492"/>
    </location>
</feature>
<feature type="strand" evidence="56">
    <location>
        <begin position="8"/>
        <end position="15"/>
    </location>
</feature>
<feature type="strand" evidence="58">
    <location>
        <begin position="19"/>
        <end position="21"/>
    </location>
</feature>
<feature type="strand" evidence="56">
    <location>
        <begin position="24"/>
        <end position="33"/>
    </location>
</feature>
<feature type="strand" evidence="56">
    <location>
        <begin position="38"/>
        <end position="42"/>
    </location>
</feature>
<feature type="helix" evidence="56">
    <location>
        <begin position="44"/>
        <end position="54"/>
    </location>
</feature>
<feature type="strand" evidence="56">
    <location>
        <begin position="57"/>
        <end position="62"/>
    </location>
</feature>
<feature type="helix" evidence="56">
    <location>
        <begin position="63"/>
        <end position="76"/>
    </location>
</feature>
<feature type="strand" evidence="56">
    <location>
        <begin position="89"/>
        <end position="95"/>
    </location>
</feature>
<feature type="strand" evidence="56">
    <location>
        <begin position="100"/>
        <end position="110"/>
    </location>
</feature>
<feature type="strand" evidence="56">
    <location>
        <begin position="113"/>
        <end position="121"/>
    </location>
</feature>
<feature type="helix" evidence="56">
    <location>
        <begin position="122"/>
        <end position="125"/>
    </location>
</feature>
<feature type="helix" evidence="56">
    <location>
        <begin position="130"/>
        <end position="136"/>
    </location>
</feature>
<feature type="strand" evidence="58">
    <location>
        <begin position="148"/>
        <end position="150"/>
    </location>
</feature>
<feature type="helix" evidence="56">
    <location>
        <begin position="160"/>
        <end position="182"/>
    </location>
</feature>
<feature type="strand" evidence="56">
    <location>
        <begin position="187"/>
        <end position="189"/>
    </location>
</feature>
<feature type="helix" evidence="56">
    <location>
        <begin position="190"/>
        <end position="202"/>
    </location>
</feature>
<feature type="helix" evidence="56">
    <location>
        <begin position="204"/>
        <end position="210"/>
    </location>
</feature>
<feature type="helix" evidence="56">
    <location>
        <begin position="216"/>
        <end position="223"/>
    </location>
</feature>
<feature type="strand" evidence="56">
    <location>
        <begin position="231"/>
        <end position="233"/>
    </location>
</feature>
<feature type="helix" evidence="56">
    <location>
        <begin position="235"/>
        <end position="237"/>
    </location>
</feature>
<feature type="strand" evidence="55">
    <location>
        <begin position="238"/>
        <end position="242"/>
    </location>
</feature>
<feature type="strand" evidence="56">
    <location>
        <begin position="244"/>
        <end position="250"/>
    </location>
</feature>
<feature type="helix" evidence="56">
    <location>
        <begin position="253"/>
        <end position="260"/>
    </location>
</feature>
<feature type="strand" evidence="56">
    <location>
        <begin position="263"/>
        <end position="274"/>
    </location>
</feature>
<feature type="strand" evidence="56">
    <location>
        <begin position="283"/>
        <end position="294"/>
    </location>
</feature>
<feature type="strand" evidence="58">
    <location>
        <begin position="308"/>
        <end position="310"/>
    </location>
</feature>
<feature type="strand" evidence="56">
    <location>
        <begin position="324"/>
        <end position="329"/>
    </location>
</feature>
<feature type="helix" evidence="56">
    <location>
        <begin position="330"/>
        <end position="339"/>
    </location>
</feature>
<feature type="strand" evidence="56">
    <location>
        <begin position="340"/>
        <end position="357"/>
    </location>
</feature>
<feature type="helix" evidence="56">
    <location>
        <begin position="361"/>
        <end position="373"/>
    </location>
</feature>
<feature type="helix" evidence="56">
    <location>
        <begin position="376"/>
        <end position="387"/>
    </location>
</feature>
<feature type="helix" evidence="56">
    <location>
        <begin position="390"/>
        <end position="393"/>
    </location>
</feature>
<feature type="strand" evidence="56">
    <location>
        <begin position="401"/>
        <end position="406"/>
    </location>
</feature>
<feature type="strand" evidence="56">
    <location>
        <begin position="410"/>
        <end position="416"/>
    </location>
</feature>
<feature type="helix" evidence="56">
    <location>
        <begin position="427"/>
        <end position="447"/>
    </location>
</feature>
<feature type="turn" evidence="56">
    <location>
        <begin position="448"/>
        <end position="451"/>
    </location>
</feature>
<feature type="strand" evidence="56">
    <location>
        <begin position="452"/>
        <end position="456"/>
    </location>
</feature>
<feature type="strand" evidence="56">
    <location>
        <begin position="459"/>
        <end position="466"/>
    </location>
</feature>
<feature type="helix" evidence="56">
    <location>
        <begin position="469"/>
        <end position="474"/>
    </location>
</feature>
<feature type="strand" evidence="56">
    <location>
        <begin position="477"/>
        <end position="479"/>
    </location>
</feature>
<feature type="strand" evidence="56">
    <location>
        <begin position="482"/>
        <end position="496"/>
    </location>
</feature>
<feature type="strand" evidence="56">
    <location>
        <begin position="499"/>
        <end position="509"/>
    </location>
</feature>
<feature type="strand" evidence="56">
    <location>
        <begin position="512"/>
        <end position="515"/>
    </location>
</feature>
<feature type="strand" evidence="57">
    <location>
        <begin position="518"/>
        <end position="520"/>
    </location>
</feature>
<feature type="strand" evidence="56">
    <location>
        <begin position="522"/>
        <end position="530"/>
    </location>
</feature>
<feature type="helix" evidence="56">
    <location>
        <begin position="535"/>
        <end position="538"/>
    </location>
</feature>
<feature type="turn" evidence="56">
    <location>
        <begin position="543"/>
        <end position="545"/>
    </location>
</feature>
<feature type="strand" evidence="56">
    <location>
        <begin position="551"/>
        <end position="561"/>
    </location>
</feature>
<feature type="strand" evidence="56">
    <location>
        <begin position="564"/>
        <end position="573"/>
    </location>
</feature>
<organismHost>
    <name type="scientific">Bacillus subtilis</name>
    <dbReference type="NCBI Taxonomy" id="1423"/>
</organismHost>
<organism>
    <name type="scientific">Bacillus phage phi29</name>
    <name type="common">Bacteriophage phi-29</name>
    <dbReference type="NCBI Taxonomy" id="2884424"/>
    <lineage>
        <taxon>Viruses</taxon>
        <taxon>Duplodnaviria</taxon>
        <taxon>Heunggongvirae</taxon>
        <taxon>Uroviricota</taxon>
        <taxon>Caudoviricetes</taxon>
        <taxon>Salasmaviridae</taxon>
        <taxon>Picovirinae</taxon>
        <taxon>Salasvirus</taxon>
        <taxon>Salasvirus phi29</taxon>
    </lineage>
</organism>
<gene>
    <name type="primary">2</name>
</gene>